<protein>
    <recommendedName>
        <fullName evidence="1">Hydroxyacylglutathione hydrolase</fullName>
        <ecNumber evidence="1">3.1.2.6</ecNumber>
    </recommendedName>
    <alternativeName>
        <fullName evidence="1">Glyoxalase II</fullName>
        <shortName evidence="1">Glx II</shortName>
    </alternativeName>
</protein>
<accession>A0Q7M7</accession>
<dbReference type="EC" id="3.1.2.6" evidence="1"/>
<dbReference type="EMBL" id="CP000439">
    <property type="protein sequence ID" value="ABK90242.1"/>
    <property type="molecule type" value="Genomic_DNA"/>
</dbReference>
<dbReference type="RefSeq" id="WP_003037222.1">
    <property type="nucleotide sequence ID" value="NZ_CP009633.1"/>
</dbReference>
<dbReference type="SMR" id="A0Q7M7"/>
<dbReference type="KEGG" id="ftn:FTN_1370"/>
<dbReference type="KEGG" id="ftx:AW25_633"/>
<dbReference type="BioCyc" id="FTUL401614:G1G75-1415-MONOMER"/>
<dbReference type="UniPathway" id="UPA00619">
    <property type="reaction ID" value="UER00676"/>
</dbReference>
<dbReference type="Proteomes" id="UP000000762">
    <property type="component" value="Chromosome"/>
</dbReference>
<dbReference type="GO" id="GO:0004416">
    <property type="term" value="F:hydroxyacylglutathione hydrolase activity"/>
    <property type="evidence" value="ECO:0007669"/>
    <property type="project" value="UniProtKB-UniRule"/>
</dbReference>
<dbReference type="GO" id="GO:0046872">
    <property type="term" value="F:metal ion binding"/>
    <property type="evidence" value="ECO:0007669"/>
    <property type="project" value="UniProtKB-KW"/>
</dbReference>
<dbReference type="GO" id="GO:0019243">
    <property type="term" value="P:methylglyoxal catabolic process to D-lactate via S-lactoyl-glutathione"/>
    <property type="evidence" value="ECO:0007669"/>
    <property type="project" value="InterPro"/>
</dbReference>
<dbReference type="CDD" id="cd07723">
    <property type="entry name" value="hydroxyacylglutathione_hydrolase_MBL-fold"/>
    <property type="match status" value="1"/>
</dbReference>
<dbReference type="Gene3D" id="3.60.15.10">
    <property type="entry name" value="Ribonuclease Z/Hydroxyacylglutathione hydrolase-like"/>
    <property type="match status" value="1"/>
</dbReference>
<dbReference type="HAMAP" id="MF_01374">
    <property type="entry name" value="Glyoxalase_2"/>
    <property type="match status" value="1"/>
</dbReference>
<dbReference type="InterPro" id="IPR035680">
    <property type="entry name" value="Clx_II_MBL"/>
</dbReference>
<dbReference type="InterPro" id="IPR050110">
    <property type="entry name" value="Glyoxalase_II_hydrolase"/>
</dbReference>
<dbReference type="InterPro" id="IPR032282">
    <property type="entry name" value="HAGH_C"/>
</dbReference>
<dbReference type="InterPro" id="IPR017782">
    <property type="entry name" value="Hydroxyacylglutathione_Hdrlase"/>
</dbReference>
<dbReference type="InterPro" id="IPR001279">
    <property type="entry name" value="Metallo-B-lactamas"/>
</dbReference>
<dbReference type="InterPro" id="IPR036866">
    <property type="entry name" value="RibonucZ/Hydroxyglut_hydro"/>
</dbReference>
<dbReference type="PANTHER" id="PTHR43705">
    <property type="entry name" value="HYDROXYACYLGLUTATHIONE HYDROLASE"/>
    <property type="match status" value="1"/>
</dbReference>
<dbReference type="PANTHER" id="PTHR43705:SF1">
    <property type="entry name" value="HYDROXYACYLGLUTATHIONE HYDROLASE GLOB"/>
    <property type="match status" value="1"/>
</dbReference>
<dbReference type="Pfam" id="PF16123">
    <property type="entry name" value="HAGH_C"/>
    <property type="match status" value="1"/>
</dbReference>
<dbReference type="Pfam" id="PF00753">
    <property type="entry name" value="Lactamase_B"/>
    <property type="match status" value="1"/>
</dbReference>
<dbReference type="SMART" id="SM00849">
    <property type="entry name" value="Lactamase_B"/>
    <property type="match status" value="1"/>
</dbReference>
<dbReference type="SUPFAM" id="SSF56281">
    <property type="entry name" value="Metallo-hydrolase/oxidoreductase"/>
    <property type="match status" value="1"/>
</dbReference>
<reference key="1">
    <citation type="journal article" date="2007" name="Genome Biol.">
        <title>Comparison of Francisella tularensis genomes reveals evolutionary events associated with the emergence of human pathogenic strains.</title>
        <authorList>
            <person name="Rohmer L."/>
            <person name="Fong C."/>
            <person name="Abmayr S."/>
            <person name="Wasnick M."/>
            <person name="Larson Freeman T.J."/>
            <person name="Radey M."/>
            <person name="Guina T."/>
            <person name="Svensson K."/>
            <person name="Hayden H.S."/>
            <person name="Jacobs M."/>
            <person name="Gallagher L.A."/>
            <person name="Manoil C."/>
            <person name="Ernst R.K."/>
            <person name="Drees B."/>
            <person name="Buckley D."/>
            <person name="Haugen E."/>
            <person name="Bovee D."/>
            <person name="Zhou Y."/>
            <person name="Chang J."/>
            <person name="Levy R."/>
            <person name="Lim R."/>
            <person name="Gillett W."/>
            <person name="Guenthener D."/>
            <person name="Kang A."/>
            <person name="Shaffer S.A."/>
            <person name="Taylor G."/>
            <person name="Chen J."/>
            <person name="Gallis B."/>
            <person name="D'Argenio D.A."/>
            <person name="Forsman M."/>
            <person name="Olson M.V."/>
            <person name="Goodlett D.R."/>
            <person name="Kaul R."/>
            <person name="Miller S.I."/>
            <person name="Brittnacher M.J."/>
        </authorList>
    </citation>
    <scope>NUCLEOTIDE SEQUENCE [LARGE SCALE GENOMIC DNA]</scope>
    <source>
        <strain>U112</strain>
    </source>
</reference>
<name>GLO2_FRATN</name>
<evidence type="ECO:0000255" key="1">
    <source>
        <dbReference type="HAMAP-Rule" id="MF_01374"/>
    </source>
</evidence>
<gene>
    <name evidence="1" type="primary">gloB</name>
    <name type="ordered locus">FTN_1370</name>
</gene>
<feature type="chain" id="PRO_0000309643" description="Hydroxyacylglutathione hydrolase">
    <location>
        <begin position="1"/>
        <end position="252"/>
    </location>
</feature>
<feature type="binding site" evidence="1">
    <location>
        <position position="54"/>
    </location>
    <ligand>
        <name>Zn(2+)</name>
        <dbReference type="ChEBI" id="CHEBI:29105"/>
        <label>1</label>
    </ligand>
</feature>
<feature type="binding site" evidence="1">
    <location>
        <position position="56"/>
    </location>
    <ligand>
        <name>Zn(2+)</name>
        <dbReference type="ChEBI" id="CHEBI:29105"/>
        <label>1</label>
    </ligand>
</feature>
<feature type="binding site" evidence="1">
    <location>
        <position position="58"/>
    </location>
    <ligand>
        <name>Zn(2+)</name>
        <dbReference type="ChEBI" id="CHEBI:29105"/>
        <label>2</label>
    </ligand>
</feature>
<feature type="binding site" evidence="1">
    <location>
        <position position="59"/>
    </location>
    <ligand>
        <name>Zn(2+)</name>
        <dbReference type="ChEBI" id="CHEBI:29105"/>
        <label>2</label>
    </ligand>
</feature>
<feature type="binding site" evidence="1">
    <location>
        <position position="111"/>
    </location>
    <ligand>
        <name>Zn(2+)</name>
        <dbReference type="ChEBI" id="CHEBI:29105"/>
        <label>1</label>
    </ligand>
</feature>
<feature type="binding site" evidence="1">
    <location>
        <position position="130"/>
    </location>
    <ligand>
        <name>Zn(2+)</name>
        <dbReference type="ChEBI" id="CHEBI:29105"/>
        <label>1</label>
    </ligand>
</feature>
<feature type="binding site" evidence="1">
    <location>
        <position position="130"/>
    </location>
    <ligand>
        <name>Zn(2+)</name>
        <dbReference type="ChEBI" id="CHEBI:29105"/>
        <label>2</label>
    </ligand>
</feature>
<feature type="binding site" evidence="1">
    <location>
        <position position="170"/>
    </location>
    <ligand>
        <name>Zn(2+)</name>
        <dbReference type="ChEBI" id="CHEBI:29105"/>
        <label>2</label>
    </ligand>
</feature>
<keyword id="KW-0378">Hydrolase</keyword>
<keyword id="KW-0479">Metal-binding</keyword>
<keyword id="KW-0862">Zinc</keyword>
<proteinExistence type="inferred from homology"/>
<sequence length="252" mass="28893">MQIKRWFLNNSLRNYQYLLYDKSHAIVIDPLKSDIFAEFIAKNKLQLEAILITHKHGDHIAGVKKLLAIYPNAKVYAYTENDLFKPDIYVKDGSFINLGFTSFRVMYTPGHIDDHVCFLFEQERALFCGDTLFNAGVGGVQAESADINQLYDSLVKITKLDGDIKPYPAHDYWLGNLDFALSILADDSYFNYYRNQVAELAAEDKPIVNLAEEAKLNIFIRAMSDKALLKALPDYSLGREMFVKLRQLKNNF</sequence>
<organism>
    <name type="scientific">Francisella tularensis subsp. novicida (strain U112)</name>
    <dbReference type="NCBI Taxonomy" id="401614"/>
    <lineage>
        <taxon>Bacteria</taxon>
        <taxon>Pseudomonadati</taxon>
        <taxon>Pseudomonadota</taxon>
        <taxon>Gammaproteobacteria</taxon>
        <taxon>Thiotrichales</taxon>
        <taxon>Francisellaceae</taxon>
        <taxon>Francisella</taxon>
    </lineage>
</organism>
<comment type="function">
    <text evidence="1">Thiolesterase that catalyzes the hydrolysis of S-D-lactoyl-glutathione to form glutathione and D-lactic acid.</text>
</comment>
<comment type="catalytic activity">
    <reaction evidence="1">
        <text>an S-(2-hydroxyacyl)glutathione + H2O = a 2-hydroxy carboxylate + glutathione + H(+)</text>
        <dbReference type="Rhea" id="RHEA:21864"/>
        <dbReference type="ChEBI" id="CHEBI:15377"/>
        <dbReference type="ChEBI" id="CHEBI:15378"/>
        <dbReference type="ChEBI" id="CHEBI:57925"/>
        <dbReference type="ChEBI" id="CHEBI:58896"/>
        <dbReference type="ChEBI" id="CHEBI:71261"/>
        <dbReference type="EC" id="3.1.2.6"/>
    </reaction>
</comment>
<comment type="cofactor">
    <cofactor evidence="1">
        <name>Zn(2+)</name>
        <dbReference type="ChEBI" id="CHEBI:29105"/>
    </cofactor>
    <text evidence="1">Binds 2 Zn(2+) ions per subunit.</text>
</comment>
<comment type="pathway">
    <text evidence="1">Secondary metabolite metabolism; methylglyoxal degradation; (R)-lactate from methylglyoxal: step 2/2.</text>
</comment>
<comment type="subunit">
    <text evidence="1">Monomer.</text>
</comment>
<comment type="similarity">
    <text evidence="1">Belongs to the metallo-beta-lactamase superfamily. Glyoxalase II family.</text>
</comment>